<comment type="function">
    <text evidence="1">Component of the cytosolic iron-sulfur (Fe-S) protein assembly (CIA) machinery. Required for the maturation of extramitochondrial Fe-S proteins. Part of an electron transfer chain functioning in an early step of cytosolic Fe-S biogenesis, facilitating the de novo assembly of a [4Fe-4S] cluster on the cytosolic Fe-S scaffold complex. Electrons are transferred from NADPH via a FAD- and FMN-containing diflavin oxidoreductase. Together with the diflavin oxidoreductase, also required for the assembly of the diferric tyrosyl radical cofactor of ribonucleotide reductase (RNR), probably by providing electrons for reduction during radical cofactor maturation in the catalytic small subunit.</text>
</comment>
<comment type="cofactor">
    <cofactor evidence="1">
        <name>[2Fe-2S] cluster</name>
        <dbReference type="ChEBI" id="CHEBI:190135"/>
    </cofactor>
</comment>
<comment type="cofactor">
    <cofactor evidence="1">
        <name>[4Fe-4S] cluster</name>
        <dbReference type="ChEBI" id="CHEBI:49883"/>
    </cofactor>
</comment>
<comment type="subunit">
    <text evidence="1">Monomer.</text>
</comment>
<comment type="subcellular location">
    <subcellularLocation>
        <location evidence="1">Cytoplasm</location>
    </subcellularLocation>
    <subcellularLocation>
        <location evidence="1">Mitochondrion intermembrane space</location>
    </subcellularLocation>
</comment>
<comment type="domain">
    <text evidence="1">The C-terminal domain binds 2 Fe-S clusters but is otherwise mostly in an intrinsically disordered conformation.</text>
</comment>
<comment type="domain">
    <text evidence="1">The N-terminal domain has structural similarity with S-adenosyl-L-methionine-dependent methyltransferases, but does not bind S-adenosyl-L-methionine. It is required for correct assembly of the 2 Fe-S clusters.</text>
</comment>
<comment type="domain">
    <text evidence="1">The twin Cx2C motifs are involved in the recognition by the mitochondrial MIA40-ERV1 disulfide relay system. The formation of 2 disulfide bonds in the Cx2C motifs through dithiol/disulfide exchange reactions effectively traps the protein in the mitochondrial intermembrane space.</text>
</comment>
<comment type="similarity">
    <text evidence="1">Belongs to the anamorsin family.</text>
</comment>
<gene>
    <name evidence="1" type="primary">CIAPIN1</name>
    <name evidence="1" type="synonym">l(2)35Bg</name>
    <name type="ORF">GF14996</name>
</gene>
<dbReference type="EMBL" id="CH902620">
    <property type="protein sequence ID" value="EDV30714.1"/>
    <property type="molecule type" value="Genomic_DNA"/>
</dbReference>
<dbReference type="FunCoup" id="B3MLC5">
    <property type="interactions" value="2187"/>
</dbReference>
<dbReference type="STRING" id="7217.B3MLC5"/>
<dbReference type="EnsemblMetazoa" id="FBtr0119696">
    <property type="protein sequence ID" value="FBpp0118188"/>
    <property type="gene ID" value="FBgn0092021"/>
</dbReference>
<dbReference type="EnsemblMetazoa" id="XM_001961457.4">
    <property type="protein sequence ID" value="XP_001961493.1"/>
    <property type="gene ID" value="LOC6497811"/>
</dbReference>
<dbReference type="GeneID" id="6497811"/>
<dbReference type="KEGG" id="dan:6497811"/>
<dbReference type="CTD" id="57019"/>
<dbReference type="eggNOG" id="KOG4020">
    <property type="taxonomic scope" value="Eukaryota"/>
</dbReference>
<dbReference type="HOGENOM" id="CLU_064393_1_0_1"/>
<dbReference type="InParanoid" id="B3MLC5"/>
<dbReference type="OMA" id="GFINCRE"/>
<dbReference type="OrthoDB" id="311633at2759"/>
<dbReference type="PhylomeDB" id="B3MLC5"/>
<dbReference type="Proteomes" id="UP000007801">
    <property type="component" value="Unassembled WGS sequence"/>
</dbReference>
<dbReference type="GO" id="GO:0005758">
    <property type="term" value="C:mitochondrial intermembrane space"/>
    <property type="evidence" value="ECO:0007669"/>
    <property type="project" value="UniProtKB-SubCell"/>
</dbReference>
<dbReference type="GO" id="GO:0051537">
    <property type="term" value="F:2 iron, 2 sulfur cluster binding"/>
    <property type="evidence" value="ECO:0007669"/>
    <property type="project" value="UniProtKB-UniRule"/>
</dbReference>
<dbReference type="GO" id="GO:0051539">
    <property type="term" value="F:4 iron, 4 sulfur cluster binding"/>
    <property type="evidence" value="ECO:0007669"/>
    <property type="project" value="UniProtKB-KW"/>
</dbReference>
<dbReference type="GO" id="GO:0009055">
    <property type="term" value="F:electron transfer activity"/>
    <property type="evidence" value="ECO:0007669"/>
    <property type="project" value="UniProtKB-UniRule"/>
</dbReference>
<dbReference type="GO" id="GO:0046872">
    <property type="term" value="F:metal ion binding"/>
    <property type="evidence" value="ECO:0007669"/>
    <property type="project" value="UniProtKB-KW"/>
</dbReference>
<dbReference type="GO" id="GO:0016226">
    <property type="term" value="P:iron-sulfur cluster assembly"/>
    <property type="evidence" value="ECO:0007669"/>
    <property type="project" value="UniProtKB-UniRule"/>
</dbReference>
<dbReference type="Gene3D" id="3.40.50.150">
    <property type="entry name" value="Vaccinia Virus protein VP39"/>
    <property type="match status" value="1"/>
</dbReference>
<dbReference type="HAMAP" id="MF_03115">
    <property type="entry name" value="Anamorsin"/>
    <property type="match status" value="1"/>
</dbReference>
<dbReference type="InterPro" id="IPR007785">
    <property type="entry name" value="Anamorsin"/>
</dbReference>
<dbReference type="InterPro" id="IPR049011">
    <property type="entry name" value="Anamorsin_N_metazoan"/>
</dbReference>
<dbReference type="InterPro" id="IPR046408">
    <property type="entry name" value="CIAPIN1"/>
</dbReference>
<dbReference type="InterPro" id="IPR029063">
    <property type="entry name" value="SAM-dependent_MTases_sf"/>
</dbReference>
<dbReference type="PANTHER" id="PTHR13273">
    <property type="entry name" value="ANAMORSIN"/>
    <property type="match status" value="1"/>
</dbReference>
<dbReference type="PANTHER" id="PTHR13273:SF14">
    <property type="entry name" value="ANAMORSIN"/>
    <property type="match status" value="1"/>
</dbReference>
<dbReference type="Pfam" id="PF20922">
    <property type="entry name" value="Anamorsin_N"/>
    <property type="match status" value="1"/>
</dbReference>
<dbReference type="Pfam" id="PF05093">
    <property type="entry name" value="CIAPIN1"/>
    <property type="match status" value="2"/>
</dbReference>
<organism>
    <name type="scientific">Drosophila ananassae</name>
    <name type="common">Fruit fly</name>
    <dbReference type="NCBI Taxonomy" id="7217"/>
    <lineage>
        <taxon>Eukaryota</taxon>
        <taxon>Metazoa</taxon>
        <taxon>Ecdysozoa</taxon>
        <taxon>Arthropoda</taxon>
        <taxon>Hexapoda</taxon>
        <taxon>Insecta</taxon>
        <taxon>Pterygota</taxon>
        <taxon>Neoptera</taxon>
        <taxon>Endopterygota</taxon>
        <taxon>Diptera</taxon>
        <taxon>Brachycera</taxon>
        <taxon>Muscomorpha</taxon>
        <taxon>Ephydroidea</taxon>
        <taxon>Drosophilidae</taxon>
        <taxon>Drosophila</taxon>
        <taxon>Sophophora</taxon>
    </lineage>
</organism>
<evidence type="ECO:0000255" key="1">
    <source>
        <dbReference type="HAMAP-Rule" id="MF_03115"/>
    </source>
</evidence>
<reference key="1">
    <citation type="journal article" date="2007" name="Nature">
        <title>Evolution of genes and genomes on the Drosophila phylogeny.</title>
        <authorList>
            <consortium name="Drosophila 12 genomes consortium"/>
        </authorList>
    </citation>
    <scope>NUCLEOTIDE SEQUENCE [LARGE SCALE GENOMIC DNA]</scope>
    <source>
        <strain>Tucson 14024-0371.13</strain>
    </source>
</reference>
<sequence length="248" mass="27048">MEQFKGLQKTLYIWTDSADLDKRVEKVKSATGGEVALENVHRLSFSSYANSSFDLIVIECAQLTDNYVKLLHMLKPSGKLHLVAFIGPAGSLLQEVKLSGFINCREDADDALTAEKPGYETGSSARLSFAKKDASALNVWKISGDDEELIDEEDLLDEEDKQKPDPAGLRVCSTTGKRKACKNCSCGLAEELESEKQSKAATENAKSSCGNCYLGDAFRCSTCPYLGMPAFKPGEKVQLADNLLKSDI</sequence>
<proteinExistence type="inferred from homology"/>
<keyword id="KW-0001">2Fe-2S</keyword>
<keyword id="KW-0004">4Fe-4S</keyword>
<keyword id="KW-0963">Cytoplasm</keyword>
<keyword id="KW-0408">Iron</keyword>
<keyword id="KW-0411">Iron-sulfur</keyword>
<keyword id="KW-0479">Metal-binding</keyword>
<keyword id="KW-0496">Mitochondrion</keyword>
<keyword id="KW-1185">Reference proteome</keyword>
<name>DRE2_DROAN</name>
<accession>B3MLC5</accession>
<protein>
    <recommendedName>
        <fullName evidence="1">Anamorsin homolog</fullName>
    </recommendedName>
    <alternativeName>
        <fullName evidence="1">Fe-S cluster assembly protein DRE2 homolog</fullName>
    </alternativeName>
</protein>
<feature type="chain" id="PRO_0000392314" description="Anamorsin homolog">
    <location>
        <begin position="1"/>
        <end position="248"/>
    </location>
</feature>
<feature type="region of interest" description="N-terminal SAM-like domain" evidence="1">
    <location>
        <begin position="4"/>
        <end position="129"/>
    </location>
</feature>
<feature type="region of interest" description="Linker" evidence="1">
    <location>
        <begin position="130"/>
        <end position="161"/>
    </location>
</feature>
<feature type="region of interest" description="Fe-S binding site A" evidence="1">
    <location>
        <begin position="172"/>
        <end position="186"/>
    </location>
</feature>
<feature type="region of interest" description="Fe-S binding site B" evidence="1">
    <location>
        <begin position="209"/>
        <end position="223"/>
    </location>
</feature>
<feature type="short sequence motif" description="Cx2C motif 1" evidence="1">
    <location>
        <begin position="209"/>
        <end position="212"/>
    </location>
</feature>
<feature type="short sequence motif" description="Cx2C motif 2" evidence="1">
    <location>
        <begin position="220"/>
        <end position="223"/>
    </location>
</feature>
<feature type="binding site" evidence="1">
    <location>
        <position position="172"/>
    </location>
    <ligand>
        <name>[2Fe-2S] cluster</name>
        <dbReference type="ChEBI" id="CHEBI:190135"/>
    </ligand>
</feature>
<feature type="binding site" evidence="1">
    <location>
        <position position="181"/>
    </location>
    <ligand>
        <name>[2Fe-2S] cluster</name>
        <dbReference type="ChEBI" id="CHEBI:190135"/>
    </ligand>
</feature>
<feature type="binding site" evidence="1">
    <location>
        <position position="184"/>
    </location>
    <ligand>
        <name>[2Fe-2S] cluster</name>
        <dbReference type="ChEBI" id="CHEBI:190135"/>
    </ligand>
</feature>
<feature type="binding site" evidence="1">
    <location>
        <position position="186"/>
    </location>
    <ligand>
        <name>[2Fe-2S] cluster</name>
        <dbReference type="ChEBI" id="CHEBI:190135"/>
    </ligand>
</feature>
<feature type="binding site" evidence="1">
    <location>
        <position position="209"/>
    </location>
    <ligand>
        <name>[4Fe-4S] cluster</name>
        <dbReference type="ChEBI" id="CHEBI:49883"/>
    </ligand>
</feature>
<feature type="binding site" evidence="1">
    <location>
        <position position="212"/>
    </location>
    <ligand>
        <name>[4Fe-4S] cluster</name>
        <dbReference type="ChEBI" id="CHEBI:49883"/>
    </ligand>
</feature>
<feature type="binding site" evidence="1">
    <location>
        <position position="220"/>
    </location>
    <ligand>
        <name>[4Fe-4S] cluster</name>
        <dbReference type="ChEBI" id="CHEBI:49883"/>
    </ligand>
</feature>
<feature type="binding site" evidence="1">
    <location>
        <position position="223"/>
    </location>
    <ligand>
        <name>[4Fe-4S] cluster</name>
        <dbReference type="ChEBI" id="CHEBI:49883"/>
    </ligand>
</feature>